<organism evidence="8">
    <name type="scientific">Drosophila melanogaster</name>
    <name type="common">Fruit fly</name>
    <dbReference type="NCBI Taxonomy" id="7227"/>
    <lineage>
        <taxon>Eukaryota</taxon>
        <taxon>Metazoa</taxon>
        <taxon>Ecdysozoa</taxon>
        <taxon>Arthropoda</taxon>
        <taxon>Hexapoda</taxon>
        <taxon>Insecta</taxon>
        <taxon>Pterygota</taxon>
        <taxon>Neoptera</taxon>
        <taxon>Endopterygota</taxon>
        <taxon>Diptera</taxon>
        <taxon>Brachycera</taxon>
        <taxon>Muscomorpha</taxon>
        <taxon>Ephydroidea</taxon>
        <taxon>Drosophilidae</taxon>
        <taxon>Drosophila</taxon>
        <taxon>Sophophora</taxon>
    </lineage>
</organism>
<gene>
    <name evidence="7" type="primary">Tmem131</name>
    <name evidence="7" type="ORF">CG8370</name>
</gene>
<reference key="1">
    <citation type="journal article" date="2000" name="Science">
        <title>The genome sequence of Drosophila melanogaster.</title>
        <authorList>
            <person name="Adams M.D."/>
            <person name="Celniker S.E."/>
            <person name="Holt R.A."/>
            <person name="Evans C.A."/>
            <person name="Gocayne J.D."/>
            <person name="Amanatides P.G."/>
            <person name="Scherer S.E."/>
            <person name="Li P.W."/>
            <person name="Hoskins R.A."/>
            <person name="Galle R.F."/>
            <person name="George R.A."/>
            <person name="Lewis S.E."/>
            <person name="Richards S."/>
            <person name="Ashburner M."/>
            <person name="Henderson S.N."/>
            <person name="Sutton G.G."/>
            <person name="Wortman J.R."/>
            <person name="Yandell M.D."/>
            <person name="Zhang Q."/>
            <person name="Chen L.X."/>
            <person name="Brandon R.C."/>
            <person name="Rogers Y.-H.C."/>
            <person name="Blazej R.G."/>
            <person name="Champe M."/>
            <person name="Pfeiffer B.D."/>
            <person name="Wan K.H."/>
            <person name="Doyle C."/>
            <person name="Baxter E.G."/>
            <person name="Helt G."/>
            <person name="Nelson C.R."/>
            <person name="Miklos G.L.G."/>
            <person name="Abril J.F."/>
            <person name="Agbayani A."/>
            <person name="An H.-J."/>
            <person name="Andrews-Pfannkoch C."/>
            <person name="Baldwin D."/>
            <person name="Ballew R.M."/>
            <person name="Basu A."/>
            <person name="Baxendale J."/>
            <person name="Bayraktaroglu L."/>
            <person name="Beasley E.M."/>
            <person name="Beeson K.Y."/>
            <person name="Benos P.V."/>
            <person name="Berman B.P."/>
            <person name="Bhandari D."/>
            <person name="Bolshakov S."/>
            <person name="Borkova D."/>
            <person name="Botchan M.R."/>
            <person name="Bouck J."/>
            <person name="Brokstein P."/>
            <person name="Brottier P."/>
            <person name="Burtis K.C."/>
            <person name="Busam D.A."/>
            <person name="Butler H."/>
            <person name="Cadieu E."/>
            <person name="Center A."/>
            <person name="Chandra I."/>
            <person name="Cherry J.M."/>
            <person name="Cawley S."/>
            <person name="Dahlke C."/>
            <person name="Davenport L.B."/>
            <person name="Davies P."/>
            <person name="de Pablos B."/>
            <person name="Delcher A."/>
            <person name="Deng Z."/>
            <person name="Mays A.D."/>
            <person name="Dew I."/>
            <person name="Dietz S.M."/>
            <person name="Dodson K."/>
            <person name="Doup L.E."/>
            <person name="Downes M."/>
            <person name="Dugan-Rocha S."/>
            <person name="Dunkov B.C."/>
            <person name="Dunn P."/>
            <person name="Durbin K.J."/>
            <person name="Evangelista C.C."/>
            <person name="Ferraz C."/>
            <person name="Ferriera S."/>
            <person name="Fleischmann W."/>
            <person name="Fosler C."/>
            <person name="Gabrielian A.E."/>
            <person name="Garg N.S."/>
            <person name="Gelbart W.M."/>
            <person name="Glasser K."/>
            <person name="Glodek A."/>
            <person name="Gong F."/>
            <person name="Gorrell J.H."/>
            <person name="Gu Z."/>
            <person name="Guan P."/>
            <person name="Harris M."/>
            <person name="Harris N.L."/>
            <person name="Harvey D.A."/>
            <person name="Heiman T.J."/>
            <person name="Hernandez J.R."/>
            <person name="Houck J."/>
            <person name="Hostin D."/>
            <person name="Houston K.A."/>
            <person name="Howland T.J."/>
            <person name="Wei M.-H."/>
            <person name="Ibegwam C."/>
            <person name="Jalali M."/>
            <person name="Kalush F."/>
            <person name="Karpen G.H."/>
            <person name="Ke Z."/>
            <person name="Kennison J.A."/>
            <person name="Ketchum K.A."/>
            <person name="Kimmel B.E."/>
            <person name="Kodira C.D."/>
            <person name="Kraft C.L."/>
            <person name="Kravitz S."/>
            <person name="Kulp D."/>
            <person name="Lai Z."/>
            <person name="Lasko P."/>
            <person name="Lei Y."/>
            <person name="Levitsky A.A."/>
            <person name="Li J.H."/>
            <person name="Li Z."/>
            <person name="Liang Y."/>
            <person name="Lin X."/>
            <person name="Liu X."/>
            <person name="Mattei B."/>
            <person name="McIntosh T.C."/>
            <person name="McLeod M.P."/>
            <person name="McPherson D."/>
            <person name="Merkulov G."/>
            <person name="Milshina N.V."/>
            <person name="Mobarry C."/>
            <person name="Morris J."/>
            <person name="Moshrefi A."/>
            <person name="Mount S.M."/>
            <person name="Moy M."/>
            <person name="Murphy B."/>
            <person name="Murphy L."/>
            <person name="Muzny D.M."/>
            <person name="Nelson D.L."/>
            <person name="Nelson D.R."/>
            <person name="Nelson K.A."/>
            <person name="Nixon K."/>
            <person name="Nusskern D.R."/>
            <person name="Pacleb J.M."/>
            <person name="Palazzolo M."/>
            <person name="Pittman G.S."/>
            <person name="Pan S."/>
            <person name="Pollard J."/>
            <person name="Puri V."/>
            <person name="Reese M.G."/>
            <person name="Reinert K."/>
            <person name="Remington K."/>
            <person name="Saunders R.D.C."/>
            <person name="Scheeler F."/>
            <person name="Shen H."/>
            <person name="Shue B.C."/>
            <person name="Siden-Kiamos I."/>
            <person name="Simpson M."/>
            <person name="Skupski M.P."/>
            <person name="Smith T.J."/>
            <person name="Spier E."/>
            <person name="Spradling A.C."/>
            <person name="Stapleton M."/>
            <person name="Strong R."/>
            <person name="Sun E."/>
            <person name="Svirskas R."/>
            <person name="Tector C."/>
            <person name="Turner R."/>
            <person name="Venter E."/>
            <person name="Wang A.H."/>
            <person name="Wang X."/>
            <person name="Wang Z.-Y."/>
            <person name="Wassarman D.A."/>
            <person name="Weinstock G.M."/>
            <person name="Weissenbach J."/>
            <person name="Williams S.M."/>
            <person name="Woodage T."/>
            <person name="Worley K.C."/>
            <person name="Wu D."/>
            <person name="Yang S."/>
            <person name="Yao Q.A."/>
            <person name="Ye J."/>
            <person name="Yeh R.-F."/>
            <person name="Zaveri J.S."/>
            <person name="Zhan M."/>
            <person name="Zhang G."/>
            <person name="Zhao Q."/>
            <person name="Zheng L."/>
            <person name="Zheng X.H."/>
            <person name="Zhong F.N."/>
            <person name="Zhong W."/>
            <person name="Zhou X."/>
            <person name="Zhu S.C."/>
            <person name="Zhu X."/>
            <person name="Smith H.O."/>
            <person name="Gibbs R.A."/>
            <person name="Myers E.W."/>
            <person name="Rubin G.M."/>
            <person name="Venter J.C."/>
        </authorList>
    </citation>
    <scope>NUCLEOTIDE SEQUENCE [LARGE SCALE GENOMIC DNA]</scope>
    <source>
        <strain>Berkeley</strain>
    </source>
</reference>
<reference key="2">
    <citation type="journal article" date="2002" name="Genome Biol.">
        <title>Annotation of the Drosophila melanogaster euchromatic genome: a systematic review.</title>
        <authorList>
            <person name="Misra S."/>
            <person name="Crosby M.A."/>
            <person name="Mungall C.J."/>
            <person name="Matthews B.B."/>
            <person name="Campbell K.S."/>
            <person name="Hradecky P."/>
            <person name="Huang Y."/>
            <person name="Kaminker J.S."/>
            <person name="Millburn G.H."/>
            <person name="Prochnik S.E."/>
            <person name="Smith C.D."/>
            <person name="Tupy J.L."/>
            <person name="Whitfield E.J."/>
            <person name="Bayraktaroglu L."/>
            <person name="Berman B.P."/>
            <person name="Bettencourt B.R."/>
            <person name="Celniker S.E."/>
            <person name="de Grey A.D.N.J."/>
            <person name="Drysdale R.A."/>
            <person name="Harris N.L."/>
            <person name="Richter J."/>
            <person name="Russo S."/>
            <person name="Schroeder A.J."/>
            <person name="Shu S.Q."/>
            <person name="Stapleton M."/>
            <person name="Yamada C."/>
            <person name="Ashburner M."/>
            <person name="Gelbart W.M."/>
            <person name="Rubin G.M."/>
            <person name="Lewis S.E."/>
        </authorList>
    </citation>
    <scope>GENOME REANNOTATION</scope>
    <source>
        <strain>Berkeley</strain>
    </source>
</reference>
<reference key="3">
    <citation type="submission" date="2007-02" db="EMBL/GenBank/DDBJ databases">
        <authorList>
            <person name="Stapleton M."/>
            <person name="Brokstein P."/>
            <person name="Hong L."/>
            <person name="Agbayani A."/>
            <person name="Carlson J.W."/>
            <person name="Champe M."/>
            <person name="Chavez C."/>
            <person name="Dorsett V."/>
            <person name="Farfan D."/>
            <person name="Frise E."/>
            <person name="George R.A."/>
            <person name="Gonzalez M."/>
            <person name="Guarin H."/>
            <person name="Kapadia B."/>
            <person name="Li P.W."/>
            <person name="Liao G."/>
            <person name="Miranda A."/>
            <person name="Mungall C.J."/>
            <person name="Nunoo J."/>
            <person name="Pacleb J.M."/>
            <person name="Paragas V."/>
            <person name="Park S."/>
            <person name="Phouanenavong S."/>
            <person name="Wan K.H."/>
            <person name="Yu C."/>
            <person name="Lewis S.E."/>
            <person name="Rubin G.M."/>
            <person name="Celniker S.E."/>
        </authorList>
    </citation>
    <scope>NUCLEOTIDE SEQUENCE [LARGE SCALE MRNA]</scope>
    <source>
        <strain>Berkeley</strain>
        <tissue>Embryo</tissue>
    </source>
</reference>
<reference key="4">
    <citation type="journal article" date="2008" name="J. Proteome Res.">
        <title>Phosphoproteome analysis of Drosophila melanogaster embryos.</title>
        <authorList>
            <person name="Zhai B."/>
            <person name="Villen J."/>
            <person name="Beausoleil S.A."/>
            <person name="Mintseris J."/>
            <person name="Gygi S.P."/>
        </authorList>
    </citation>
    <scope>PHOSPHORYLATION [LARGE SCALE ANALYSIS] AT SER-1201 AND SER-1258</scope>
    <scope>IDENTIFICATION BY MASS SPECTROMETRY</scope>
    <source>
        <tissue>Embryo</tissue>
    </source>
</reference>
<reference key="5">
    <citation type="journal article" date="2020" name="Sci. Adv.">
        <title>Broadly conserved roles of TMEM131 family proteins in intracellular collagen assembly and secretory cargo trafficking.</title>
        <authorList>
            <person name="Zhang Z."/>
            <person name="Bai M."/>
            <person name="Barbosa G.O."/>
            <person name="Chen A."/>
            <person name="Wei Y."/>
            <person name="Luo S."/>
            <person name="Wang X."/>
            <person name="Wang B."/>
            <person name="Tsukui T."/>
            <person name="Li H."/>
            <person name="Sheppard D."/>
            <person name="Kornberg T.B."/>
            <person name="Ma D.K."/>
        </authorList>
    </citation>
    <scope>FUNCTION</scope>
    <scope>INTERACTION WITH COLLAGEN</scope>
    <scope>DOMAIN PAPD-L</scope>
    <scope>DISRUPTION PHENOTYPE</scope>
</reference>
<proteinExistence type="evidence at protein level"/>
<dbReference type="EMBL" id="AE013599">
    <property type="protein sequence ID" value="AAF58081.2"/>
    <property type="molecule type" value="Genomic_DNA"/>
</dbReference>
<dbReference type="EMBL" id="AE013599">
    <property type="protein sequence ID" value="AHN56268.1"/>
    <property type="molecule type" value="Genomic_DNA"/>
</dbReference>
<dbReference type="EMBL" id="AY052006">
    <property type="protein sequence ID" value="AAK93430.1"/>
    <property type="status" value="ALT_SEQ"/>
    <property type="molecule type" value="mRNA"/>
</dbReference>
<dbReference type="EMBL" id="BT028798">
    <property type="protein sequence ID" value="ABI34179.1"/>
    <property type="molecule type" value="mRNA"/>
</dbReference>
<dbReference type="RefSeq" id="NP_001286471.1">
    <property type="nucleotide sequence ID" value="NM_001299542.1"/>
</dbReference>
<dbReference type="RefSeq" id="NP_611073.2">
    <property type="nucleotide sequence ID" value="NM_137229.3"/>
</dbReference>
<dbReference type="SMR" id="Q9V7H4"/>
<dbReference type="FunCoup" id="Q9V7H4">
    <property type="interactions" value="2089"/>
</dbReference>
<dbReference type="IntAct" id="Q9V7H4">
    <property type="interactions" value="1"/>
</dbReference>
<dbReference type="STRING" id="7227.FBpp0086345"/>
<dbReference type="GlyGen" id="Q9V7H4">
    <property type="glycosylation" value="16 sites"/>
</dbReference>
<dbReference type="iPTMnet" id="Q9V7H4"/>
<dbReference type="PaxDb" id="7227-FBpp0086345"/>
<dbReference type="EnsemblMetazoa" id="FBtr0087203">
    <property type="protein sequence ID" value="FBpp0086345"/>
    <property type="gene ID" value="FBgn0034060"/>
</dbReference>
<dbReference type="EnsemblMetazoa" id="FBtr0340015">
    <property type="protein sequence ID" value="FBpp0309029"/>
    <property type="gene ID" value="FBgn0034060"/>
</dbReference>
<dbReference type="GeneID" id="36761"/>
<dbReference type="KEGG" id="dme:Dmel_CG8370"/>
<dbReference type="UCSC" id="CG8370-RA">
    <property type="organism name" value="d. melanogaster"/>
</dbReference>
<dbReference type="AGR" id="FB:FBgn0034060"/>
<dbReference type="CTD" id="23505"/>
<dbReference type="FlyBase" id="FBgn0034060">
    <property type="gene designation" value="Tmem131"/>
</dbReference>
<dbReference type="VEuPathDB" id="VectorBase:FBgn0034060"/>
<dbReference type="eggNOG" id="KOG3620">
    <property type="taxonomic scope" value="Eukaryota"/>
</dbReference>
<dbReference type="GeneTree" id="ENSGT00530000063614"/>
<dbReference type="HOGENOM" id="CLU_245976_0_0_1"/>
<dbReference type="InParanoid" id="Q9V7H4"/>
<dbReference type="OMA" id="NQHTNRT"/>
<dbReference type="OrthoDB" id="168404at2759"/>
<dbReference type="PhylomeDB" id="Q9V7H4"/>
<dbReference type="BioGRID-ORCS" id="36761">
    <property type="hits" value="0 hits in 3 CRISPR screens"/>
</dbReference>
<dbReference type="GenomeRNAi" id="36761"/>
<dbReference type="PRO" id="PR:Q9V7H4"/>
<dbReference type="Proteomes" id="UP000000803">
    <property type="component" value="Chromosome 2R"/>
</dbReference>
<dbReference type="Bgee" id="FBgn0034060">
    <property type="expression patterns" value="Expressed in adult oenocyte (Drosophila) in body wall and 88 other cell types or tissues"/>
</dbReference>
<dbReference type="ExpressionAtlas" id="Q9V7H4">
    <property type="expression patterns" value="baseline and differential"/>
</dbReference>
<dbReference type="GO" id="GO:0012505">
    <property type="term" value="C:endomembrane system"/>
    <property type="evidence" value="ECO:0007005"/>
    <property type="project" value="FlyBase"/>
</dbReference>
<dbReference type="GO" id="GO:0016020">
    <property type="term" value="C:membrane"/>
    <property type="evidence" value="ECO:0000318"/>
    <property type="project" value="GO_Central"/>
</dbReference>
<dbReference type="GO" id="GO:0032964">
    <property type="term" value="P:collagen biosynthetic process"/>
    <property type="evidence" value="ECO:0000315"/>
    <property type="project" value="UniProtKB"/>
</dbReference>
<dbReference type="Gene3D" id="2.60.40.10">
    <property type="entry name" value="Immunoglobulins"/>
    <property type="match status" value="1"/>
</dbReference>
<dbReference type="InterPro" id="IPR013783">
    <property type="entry name" value="Ig-like_fold"/>
</dbReference>
<dbReference type="InterPro" id="IPR056311">
    <property type="entry name" value="Ig_TMEM131_2"/>
</dbReference>
<dbReference type="InterPro" id="IPR055437">
    <property type="entry name" value="Ig_TMEM131L_5"/>
</dbReference>
<dbReference type="InterPro" id="IPR039877">
    <property type="entry name" value="TMEM131-like"/>
</dbReference>
<dbReference type="InterPro" id="IPR022113">
    <property type="entry name" value="TMEM131-like_N"/>
</dbReference>
<dbReference type="NCBIfam" id="NF012200">
    <property type="entry name" value="choice_anch_D"/>
    <property type="match status" value="1"/>
</dbReference>
<dbReference type="PANTHER" id="PTHR22050">
    <property type="entry name" value="RW1 PROTEIN HOMOLOG"/>
    <property type="match status" value="1"/>
</dbReference>
<dbReference type="PANTHER" id="PTHR22050:SF0">
    <property type="entry name" value="TRANSMEMBRANE PROTEIN 131 HOMOLOG"/>
    <property type="match status" value="1"/>
</dbReference>
<dbReference type="Pfam" id="PF24495">
    <property type="entry name" value="Ig_TMEM131_2"/>
    <property type="match status" value="1"/>
</dbReference>
<dbReference type="Pfam" id="PF24502">
    <property type="entry name" value="Ig_TMEM131homol_3rd"/>
    <property type="match status" value="1"/>
</dbReference>
<dbReference type="Pfam" id="PF24505">
    <property type="entry name" value="Ig_TMEM131homol_6th"/>
    <property type="match status" value="1"/>
</dbReference>
<dbReference type="Pfam" id="PF24501">
    <property type="entry name" value="Ig_TMEM131L_5"/>
    <property type="match status" value="1"/>
</dbReference>
<dbReference type="Pfam" id="PF12371">
    <property type="entry name" value="TMEM131_like_N"/>
    <property type="match status" value="1"/>
</dbReference>
<comment type="function">
    <text evidence="5">Collagen binding transmembrane protein involved in collagen secretion, probably by recruiting the ER-to-Golgi transport complex TRAPPIII.</text>
</comment>
<comment type="subunit">
    <text evidence="5">May interact (via PapD-L domain) with collagen proteins (via C-terminus); the interaction is direct and is involved in assembly and TRAPPIII ER-to-Golgi transport complex-dependent secretion of collagen.</text>
</comment>
<comment type="subcellular location">
    <subcellularLocation>
        <location evidence="2">Membrane</location>
        <topology evidence="2">Single-pass type I membrane protein</topology>
    </subcellularLocation>
</comment>
<comment type="domain">
    <text evidence="5">Possesses a PapD-like (PapD-L) domain similar to PapD domains involved in assembly and secretion of bacterial pilus components (PubMed:32095531). The PapD-L domain can bind collagens and is probably involved in collagen assembly and secretion (PubMed:32095531).</text>
</comment>
<comment type="disruption phenotype">
    <text evidence="5">RNAi-mediated knockdown in fat body results in collagen accumulation in fat body cells and defective secretion of collagen into the hemolymph.</text>
</comment>
<comment type="similarity">
    <text evidence="6">Belongs to the TMEM131 family.</text>
</comment>
<comment type="sequence caution" evidence="6">
    <conflict type="erroneous termination">
        <sequence resource="EMBL-CDS" id="AAK93430"/>
    </conflict>
    <text>Truncated C-terminus.</text>
</comment>
<accession>Q9V7H4</accession>
<accession>A0A0B4LFJ4</accession>
<accession>Q0IGX2</accession>
<accession>Q960K9</accession>
<evidence type="ECO:0000250" key="1">
    <source>
        <dbReference type="UniProtKB" id="Q18264"/>
    </source>
</evidence>
<evidence type="ECO:0000255" key="2"/>
<evidence type="ECO:0000256" key="3">
    <source>
        <dbReference type="SAM" id="MobiDB-lite"/>
    </source>
</evidence>
<evidence type="ECO:0000269" key="4">
    <source>
    </source>
</evidence>
<evidence type="ECO:0000269" key="5">
    <source>
    </source>
</evidence>
<evidence type="ECO:0000305" key="6"/>
<evidence type="ECO:0000312" key="7">
    <source>
        <dbReference type="FlyBase" id="FBgn0034060"/>
    </source>
</evidence>
<evidence type="ECO:0000312" key="8">
    <source>
        <dbReference type="Proteomes" id="UP000000803"/>
    </source>
</evidence>
<sequence>MPTQVQMRPLLRIFAEPILLILIFLFTLGAKGEKVLQETFLGLQEAPIHDLGDLRLVPSRLDFGTWSVGQARSQTVTLFNQHSNRTLQLNAVAGPSPAFYSSFLGTREVPPQGNTTFNVVFLPRQLGAIAADLLIHTSFGQAELAVQGEGSECPYRLKPLVGIKAPMNATLTPEIHMYNPHERPLQILEIYSSGGEFQLELPSGGSEGPQNLWKIPPHTLKPVIRISFHGRTAGNHSAYIRIKVAEQELDIFIPVEFEILPRHSVYARNPLADFGRVATLNAPDALQFKLDVRNDESRQLFGSYLRQIPGLSFDANNTSIVLDASLFEGDEIINDLLVINSNQSSTSPGADQPFTVLVRAEIFHGGLTFDRNATRFVTTSPEGVEGEPLERKRSLVVRNKFAIPLMLFNVSLTEPIDESILEVTLVGDPRILIQPDESVELLRLNLLNDQVPFKSFLRIETNVTVFKLPLVSCSGRLHVSTQPIVLNFRQESLEKAAYNLELDLGTVPFAEMSRDGFVILRNDNPVPVRITNWFFKHPKTVYSQSTFLGCRATAIGHPVSVENDTKGWHLCTEIRAGESAVFKVAIQTYEADATFGTLKVWTPYEVIRVRVKFEASVGHLEIDQEQLSFKNCFPGKMCTAVLSIRSSFTHPVHVKGISFALPVGLRFKDFNAKGTTIAPQTLTKVGRIYFDPASVCRNNCYIRESTNDLAIFPSVPGGGNGNSGVINNNLLYDGVELRQRTELFRQLRRQLSSMSLTLHSEELPPLELDFSITIEWPKLVQFQPIPPTPAIEVGQVQRQWITLTNPSQSPLLLDYFLSDPAFARRTQLSLPHEVIDVSSTSCYLTDKEVFSLPEAGDPILLPGGASLTIPITFSAQLPEKYCTLLHVRSNLTLYEAVWLQARAVQSQFRFGNRRPGAASPLLFEMATNQFQGCQSGNEAVVVTRSFTARNSGVIPIRIEGFLIGSLPCEDFGFKVMDCAGFDLGENEARKVEIAFSADFTTSAVKRSLTLLTNLTYDISYKLLAQMPAESVELCASLLVRPGWESSLKNAALVVLLASFGLVLVAAVFDAKAIMVQQNAYDAARNKGPLQPTFNLRNIVKLQAEEAAAKAESVQQQQKVKNGQLKELRKRTVVNSTNSKSKSKSSWSPWSMDMNALSKHLQKAKPKTVVSTPVTPPAASAPAAAPVPLPEAKPVKKSSTPSPQGVPISVQVRPQKKVKPTPAVVLGTTKPKQEVSTPVADQHEKSLAKSSPPQQENISPKPNKPPEQRVLKEQNGSAKKMGKTPGRERERERRSKDQKLTNGTGAGVGFRKPERKQRQKLNFGQTTNSTSPPESPDALKCISNPWETSSRVSFRDVLRTPQMAPTDNGFDWNHATSSSDLGPIGDNRKNATPPMVTSLWEPLSATASNSLFANTEVDFITPDAIYEQREREKPQWEQRSDLVMRQQLLLQQPQKLEFQLRQQEKISLLANMDPSNWATNWSPLGYSTWPNATAGIGVMRPPPGLEQSARQTHNLAQEQVSAGPASGTGAALHGESLPTQYDPFTSPSSIWSDTWRQSSQRNNHNHMN</sequence>
<keyword id="KW-0175">Coiled coil</keyword>
<keyword id="KW-0325">Glycoprotein</keyword>
<keyword id="KW-0472">Membrane</keyword>
<keyword id="KW-0597">Phosphoprotein</keyword>
<keyword id="KW-1185">Reference proteome</keyword>
<keyword id="KW-0732">Signal</keyword>
<keyword id="KW-0812">Transmembrane</keyword>
<keyword id="KW-1133">Transmembrane helix</keyword>
<name>TM131_DROME</name>
<protein>
    <recommendedName>
        <fullName evidence="7">Transmembrane protein 131 homolog</fullName>
    </recommendedName>
</protein>
<feature type="signal peptide" evidence="2">
    <location>
        <begin position="1"/>
        <end position="32"/>
    </location>
</feature>
<feature type="chain" id="PRO_0000097537" description="Transmembrane protein 131 homolog" evidence="2">
    <location>
        <begin position="33"/>
        <end position="1567"/>
    </location>
</feature>
<feature type="topological domain" description="Lumenal" evidence="6">
    <location>
        <begin position="33"/>
        <end position="1049"/>
    </location>
</feature>
<feature type="transmembrane region" description="Helical" evidence="2">
    <location>
        <begin position="1050"/>
        <end position="1070"/>
    </location>
</feature>
<feature type="topological domain" description="Cytoplasmic" evidence="6">
    <location>
        <begin position="1071"/>
        <end position="1567"/>
    </location>
</feature>
<feature type="region of interest" description="PapD-L domain" evidence="1">
    <location>
        <begin position="55"/>
        <end position="228"/>
    </location>
</feature>
<feature type="region of interest" description="Disordered" evidence="3">
    <location>
        <begin position="1112"/>
        <end position="1337"/>
    </location>
</feature>
<feature type="region of interest" description="Disordered" evidence="3">
    <location>
        <begin position="1364"/>
        <end position="1386"/>
    </location>
</feature>
<feature type="region of interest" description="Disordered" evidence="3">
    <location>
        <begin position="1502"/>
        <end position="1567"/>
    </location>
</feature>
<feature type="coiled-coil region" evidence="2">
    <location>
        <begin position="1096"/>
        <end position="1130"/>
    </location>
</feature>
<feature type="compositionally biased region" description="Low complexity" evidence="3">
    <location>
        <begin position="1132"/>
        <end position="1150"/>
    </location>
</feature>
<feature type="compositionally biased region" description="Low complexity" evidence="3">
    <location>
        <begin position="1166"/>
        <end position="1183"/>
    </location>
</feature>
<feature type="compositionally biased region" description="Polar residues" evidence="3">
    <location>
        <begin position="1247"/>
        <end position="1259"/>
    </location>
</feature>
<feature type="compositionally biased region" description="Basic and acidic residues" evidence="3">
    <location>
        <begin position="1284"/>
        <end position="1298"/>
    </location>
</feature>
<feature type="compositionally biased region" description="Polar residues" evidence="3">
    <location>
        <begin position="1319"/>
        <end position="1331"/>
    </location>
</feature>
<feature type="compositionally biased region" description="Polar residues" evidence="3">
    <location>
        <begin position="1507"/>
        <end position="1519"/>
    </location>
</feature>
<feature type="compositionally biased region" description="Polar residues" evidence="3">
    <location>
        <begin position="1536"/>
        <end position="1561"/>
    </location>
</feature>
<feature type="modified residue" description="Phosphoserine" evidence="4">
    <location>
        <position position="1201"/>
    </location>
</feature>
<feature type="modified residue" description="Phosphoserine" evidence="4">
    <location>
        <position position="1258"/>
    </location>
</feature>
<feature type="glycosylation site" description="N-linked (GlcNAc...) asparagine" evidence="2">
    <location>
        <position position="84"/>
    </location>
</feature>
<feature type="glycosylation site" description="N-linked (GlcNAc...) asparagine" evidence="2">
    <location>
        <position position="114"/>
    </location>
</feature>
<feature type="glycosylation site" description="N-linked (GlcNAc...) asparagine" evidence="2">
    <location>
        <position position="168"/>
    </location>
</feature>
<feature type="glycosylation site" description="N-linked (GlcNAc...) asparagine" evidence="2">
    <location>
        <position position="235"/>
    </location>
</feature>
<feature type="glycosylation site" description="N-linked (GlcNAc...) asparagine" evidence="2">
    <location>
        <position position="316"/>
    </location>
</feature>
<feature type="glycosylation site" description="N-linked (GlcNAc...) asparagine" evidence="2">
    <location>
        <position position="317"/>
    </location>
</feature>
<feature type="glycosylation site" description="N-linked (GlcNAc...) asparagine" evidence="2">
    <location>
        <position position="342"/>
    </location>
</feature>
<feature type="glycosylation site" description="N-linked (GlcNAc...) asparagine" evidence="2">
    <location>
        <position position="372"/>
    </location>
</feature>
<feature type="glycosylation site" description="N-linked (GlcNAc...) asparagine" evidence="2">
    <location>
        <position position="409"/>
    </location>
</feature>
<feature type="glycosylation site" description="N-linked (GlcNAc...) asparagine" evidence="2">
    <location>
        <position position="462"/>
    </location>
</feature>
<feature type="glycosylation site" description="N-linked (GlcNAc...) asparagine" evidence="2">
    <location>
        <position position="563"/>
    </location>
</feature>
<feature type="glycosylation site" description="N-linked (GlcNAc...) asparagine" evidence="2">
    <location>
        <position position="890"/>
    </location>
</feature>
<feature type="glycosylation site" description="N-linked (GlcNAc...) asparagine" evidence="2">
    <location>
        <position position="1013"/>
    </location>
</feature>